<sequence>MAIPQASMGPSSLGQSGPGSMAPWCSVSSGPTRYVLGMQELFRGHSKTREFPAHSAKVHSVAWSCDGRRLASGSFDKTASVFLLEKDRLVKENNYRGHGDSVDQLCWHPSNPDLFVTASGDKTIRIWDVRTTKCIATVNTKGENINICWSPDGQTIAVGNKDDVVTFIDAKTHRSKAEEQFKFEVNEISWNNDNNMFFLTNGNGCINILSYPELKPVQSINAHPSNCICIKFDPMGKYFATGSADALVSLWDVDELVCVRCFSRLDWPVRTLSFSHDGKMLASASEDHFIDIAEVETGDKLWEVQCESPTFTVAWHPKRPLLAFACDDKDGKYDSSREAGTVKLFGLPNDS</sequence>
<protein>
    <recommendedName>
        <fullName>THO complex subunit 3</fullName>
        <shortName>Tho3</shortName>
    </recommendedName>
</protein>
<proteinExistence type="evidence at transcript level"/>
<evidence type="ECO:0000250" key="1"/>
<evidence type="ECO:0000250" key="2">
    <source>
        <dbReference type="UniProtKB" id="Q96J01"/>
    </source>
</evidence>
<evidence type="ECO:0000256" key="3">
    <source>
        <dbReference type="SAM" id="MobiDB-lite"/>
    </source>
</evidence>
<evidence type="ECO:0000305" key="4"/>
<accession>Q29RH4</accession>
<organism>
    <name type="scientific">Bos taurus</name>
    <name type="common">Bovine</name>
    <dbReference type="NCBI Taxonomy" id="9913"/>
    <lineage>
        <taxon>Eukaryota</taxon>
        <taxon>Metazoa</taxon>
        <taxon>Chordata</taxon>
        <taxon>Craniata</taxon>
        <taxon>Vertebrata</taxon>
        <taxon>Euteleostomi</taxon>
        <taxon>Mammalia</taxon>
        <taxon>Eutheria</taxon>
        <taxon>Laurasiatheria</taxon>
        <taxon>Artiodactyla</taxon>
        <taxon>Ruminantia</taxon>
        <taxon>Pecora</taxon>
        <taxon>Bovidae</taxon>
        <taxon>Bovinae</taxon>
        <taxon>Bos</taxon>
    </lineage>
</organism>
<reference key="1">
    <citation type="submission" date="2006-02" db="EMBL/GenBank/DDBJ databases">
        <authorList>
            <consortium name="NIH - Mammalian Gene Collection (MGC) project"/>
        </authorList>
    </citation>
    <scope>NUCLEOTIDE SEQUENCE [LARGE SCALE MRNA]</scope>
    <source>
        <strain>Hereford</strain>
        <tissue>Heart ventricle</tissue>
    </source>
</reference>
<name>THOC3_BOVIN</name>
<gene>
    <name type="primary">THOC3</name>
</gene>
<dbReference type="EMBL" id="BC114172">
    <property type="protein sequence ID" value="AAI14173.1"/>
    <property type="molecule type" value="mRNA"/>
</dbReference>
<dbReference type="RefSeq" id="NP_001039765.1">
    <property type="nucleotide sequence ID" value="NM_001046300.2"/>
</dbReference>
<dbReference type="SMR" id="Q29RH4"/>
<dbReference type="FunCoup" id="Q29RH4">
    <property type="interactions" value="3551"/>
</dbReference>
<dbReference type="STRING" id="9913.ENSBTAP00000046521"/>
<dbReference type="Ensembl" id="ENSBTAT00000049661.5">
    <property type="protein sequence ID" value="ENSBTAP00000046521.4"/>
    <property type="gene ID" value="ENSBTAG00000035174.5"/>
</dbReference>
<dbReference type="GeneID" id="529231"/>
<dbReference type="KEGG" id="bta:529231"/>
<dbReference type="CTD" id="84321"/>
<dbReference type="VEuPathDB" id="HostDB:ENSBTAG00000035174"/>
<dbReference type="VGNC" id="VGNC:58351">
    <property type="gene designation" value="THOC3"/>
</dbReference>
<dbReference type="GeneTree" id="ENSGT00940000158129"/>
<dbReference type="InParanoid" id="Q29RH4"/>
<dbReference type="OMA" id="WNADGRH"/>
<dbReference type="OrthoDB" id="340259at2759"/>
<dbReference type="Reactome" id="R-BTA-159236">
    <property type="pathway name" value="Transport of Mature mRNA derived from an Intron-Containing Transcript"/>
</dbReference>
<dbReference type="Reactome" id="R-BTA-72187">
    <property type="pathway name" value="mRNA 3'-end processing"/>
</dbReference>
<dbReference type="Reactome" id="R-BTA-73856">
    <property type="pathway name" value="RNA Polymerase II Transcription Termination"/>
</dbReference>
<dbReference type="Proteomes" id="UP000009136">
    <property type="component" value="Chromosome 10"/>
</dbReference>
<dbReference type="Bgee" id="ENSBTAG00000035174">
    <property type="expression patterns" value="Expressed in oocyte and 104 other cell types or tissues"/>
</dbReference>
<dbReference type="GO" id="GO:0000781">
    <property type="term" value="C:chromosome, telomeric region"/>
    <property type="evidence" value="ECO:0007669"/>
    <property type="project" value="Ensembl"/>
</dbReference>
<dbReference type="GO" id="GO:0016607">
    <property type="term" value="C:nuclear speck"/>
    <property type="evidence" value="ECO:0007669"/>
    <property type="project" value="UniProtKB-SubCell"/>
</dbReference>
<dbReference type="GO" id="GO:0000445">
    <property type="term" value="C:THO complex part of transcription export complex"/>
    <property type="evidence" value="ECO:0000250"/>
    <property type="project" value="UniProtKB"/>
</dbReference>
<dbReference type="GO" id="GO:0003723">
    <property type="term" value="F:RNA binding"/>
    <property type="evidence" value="ECO:0007669"/>
    <property type="project" value="UniProtKB-KW"/>
</dbReference>
<dbReference type="GO" id="GO:0006406">
    <property type="term" value="P:mRNA export from nucleus"/>
    <property type="evidence" value="ECO:0000318"/>
    <property type="project" value="GO_Central"/>
</dbReference>
<dbReference type="GO" id="GO:0006397">
    <property type="term" value="P:mRNA processing"/>
    <property type="evidence" value="ECO:0007669"/>
    <property type="project" value="UniProtKB-KW"/>
</dbReference>
<dbReference type="GO" id="GO:0008380">
    <property type="term" value="P:RNA splicing"/>
    <property type="evidence" value="ECO:0007669"/>
    <property type="project" value="UniProtKB-KW"/>
</dbReference>
<dbReference type="CDD" id="cd00200">
    <property type="entry name" value="WD40"/>
    <property type="match status" value="1"/>
</dbReference>
<dbReference type="FunFam" id="2.130.10.10:FF:000122">
    <property type="entry name" value="THO complex subunit 3"/>
    <property type="match status" value="1"/>
</dbReference>
<dbReference type="FunFam" id="2.130.10.10:FF:000166">
    <property type="entry name" value="THO complex subunit 3"/>
    <property type="match status" value="1"/>
</dbReference>
<dbReference type="Gene3D" id="2.130.10.10">
    <property type="entry name" value="YVTN repeat-like/Quinoprotein amine dehydrogenase"/>
    <property type="match status" value="2"/>
</dbReference>
<dbReference type="InterPro" id="IPR020472">
    <property type="entry name" value="G-protein_beta_WD-40_rep"/>
</dbReference>
<dbReference type="InterPro" id="IPR040132">
    <property type="entry name" value="Tex1/THOC3"/>
</dbReference>
<dbReference type="InterPro" id="IPR015943">
    <property type="entry name" value="WD40/YVTN_repeat-like_dom_sf"/>
</dbReference>
<dbReference type="InterPro" id="IPR036322">
    <property type="entry name" value="WD40_repeat_dom_sf"/>
</dbReference>
<dbReference type="InterPro" id="IPR001680">
    <property type="entry name" value="WD40_rpt"/>
</dbReference>
<dbReference type="PANTHER" id="PTHR22839:SF0">
    <property type="entry name" value="THO COMPLEX SUBUNIT 3"/>
    <property type="match status" value="1"/>
</dbReference>
<dbReference type="PANTHER" id="PTHR22839">
    <property type="entry name" value="THO COMPLEX SUBUNIT 3 THO3"/>
    <property type="match status" value="1"/>
</dbReference>
<dbReference type="Pfam" id="PF25174">
    <property type="entry name" value="Beta-prop_THOC3"/>
    <property type="match status" value="1"/>
</dbReference>
<dbReference type="PRINTS" id="PR00320">
    <property type="entry name" value="GPROTEINBRPT"/>
</dbReference>
<dbReference type="SMART" id="SM00320">
    <property type="entry name" value="WD40"/>
    <property type="match status" value="6"/>
</dbReference>
<dbReference type="SUPFAM" id="SSF50978">
    <property type="entry name" value="WD40 repeat-like"/>
    <property type="match status" value="1"/>
</dbReference>
<dbReference type="PROSITE" id="PS50082">
    <property type="entry name" value="WD_REPEATS_2"/>
    <property type="match status" value="3"/>
</dbReference>
<dbReference type="PROSITE" id="PS50294">
    <property type="entry name" value="WD_REPEATS_REGION"/>
    <property type="match status" value="1"/>
</dbReference>
<comment type="function">
    <text evidence="2">Component of the THO subcomplex of the TREX complex which is thought to couple mRNA transcription, processing and nuclear export, and which specifically associates with spliced mRNA and not with unspliced pre-mRNA. Required for efficient export of polyadenylated RNA and spliced mRNA. The THOC1-THOC2-THOC3 core complex alone is sufficient to bind export factor NXF1-NXT1 and promote ATPase activity of DDX39B. TREX is recruited to spliced mRNAs by a transcription-independent mechanism, binds to mRNA upstream of the exon-junction complex (EJC) and is recruited in a splicing- and cap-dependent manner to a region near the 5' end of the mRNA where it functions in mRNA export to the cytoplasm via the TAP/NXF1 pathway.</text>
</comment>
<comment type="subunit">
    <text evidence="1">Component of the THO subcomplex, which is composed of THOC1, THOC2, THOC3, THOC5, THOC6 and THOC7. The THO subcomplex interacts with DDX39B to form the THO-DDX39B complex which multimerizes into a 28-subunit tetrameric assembly. Component of the transcription/export (TREX) complex at least composed of ALYREF/THOC4, DDX39B, SARNP/CIP29, CHTOP and the THO subcomplex; in the complex interacts with THOC2. TREX seems to have a dynamic structure involving ATP-dependent remodeling.</text>
</comment>
<comment type="subcellular location">
    <subcellularLocation>
        <location evidence="4">Nucleus</location>
    </subcellularLocation>
    <subcellularLocation>
        <location evidence="4">Nucleus speckle</location>
    </subcellularLocation>
</comment>
<comment type="similarity">
    <text evidence="4">Belongs to the THOC3 family.</text>
</comment>
<feature type="initiator methionine" description="Removed" evidence="2">
    <location>
        <position position="1"/>
    </location>
</feature>
<feature type="chain" id="PRO_0000254021" description="THO complex subunit 3">
    <location>
        <begin position="2"/>
        <end position="351"/>
    </location>
</feature>
<feature type="repeat" description="WD 1" evidence="2">
    <location>
        <begin position="53"/>
        <end position="94"/>
    </location>
</feature>
<feature type="repeat" description="WD 2" evidence="2">
    <location>
        <begin position="97"/>
        <end position="137"/>
    </location>
</feature>
<feature type="repeat" description="WD 3" evidence="2">
    <location>
        <begin position="139"/>
        <end position="178"/>
    </location>
</feature>
<feature type="repeat" description="WD 4" evidence="2">
    <location>
        <begin position="180"/>
        <end position="221"/>
    </location>
</feature>
<feature type="repeat" description="WD 5" evidence="2">
    <location>
        <begin position="222"/>
        <end position="261"/>
    </location>
</feature>
<feature type="repeat" description="WD 6" evidence="2">
    <location>
        <begin position="264"/>
        <end position="303"/>
    </location>
</feature>
<feature type="region of interest" description="Disordered" evidence="3">
    <location>
        <begin position="1"/>
        <end position="22"/>
    </location>
</feature>
<feature type="compositionally biased region" description="Low complexity" evidence="3">
    <location>
        <begin position="7"/>
        <end position="21"/>
    </location>
</feature>
<feature type="modified residue" description="N-acetylalanine" evidence="2">
    <location>
        <position position="2"/>
    </location>
</feature>
<keyword id="KW-0007">Acetylation</keyword>
<keyword id="KW-0507">mRNA processing</keyword>
<keyword id="KW-0508">mRNA splicing</keyword>
<keyword id="KW-0509">mRNA transport</keyword>
<keyword id="KW-0539">Nucleus</keyword>
<keyword id="KW-1185">Reference proteome</keyword>
<keyword id="KW-0677">Repeat</keyword>
<keyword id="KW-0694">RNA-binding</keyword>
<keyword id="KW-0813">Transport</keyword>
<keyword id="KW-0853">WD repeat</keyword>